<organism>
    <name type="scientific">Homo sapiens</name>
    <name type="common">Human</name>
    <dbReference type="NCBI Taxonomy" id="9606"/>
    <lineage>
        <taxon>Eukaryota</taxon>
        <taxon>Metazoa</taxon>
        <taxon>Chordata</taxon>
        <taxon>Craniata</taxon>
        <taxon>Vertebrata</taxon>
        <taxon>Euteleostomi</taxon>
        <taxon>Mammalia</taxon>
        <taxon>Eutheria</taxon>
        <taxon>Euarchontoglires</taxon>
        <taxon>Primates</taxon>
        <taxon>Haplorrhini</taxon>
        <taxon>Catarrhini</taxon>
        <taxon>Hominidae</taxon>
        <taxon>Homo</taxon>
    </lineage>
</organism>
<evidence type="ECO:0000255" key="1"/>
<evidence type="ECO:0000269" key="2">
    <source>
    </source>
</evidence>
<evidence type="ECO:0000305" key="3"/>
<evidence type="ECO:0000305" key="4">
    <source>
    </source>
</evidence>
<comment type="subunit">
    <text evidence="2">Present in high molecular weight complexes in tumor cells. Interacts with SDCBP2 (PubMed:11102519).</text>
</comment>
<comment type="interaction">
    <interactant intactId="EBI-714256">
        <id>P30408</id>
    </interactant>
    <interactant intactId="EBI-742426">
        <id>Q9H190</id>
        <label>SDCBP2</label>
    </interactant>
    <organismsDiffer>false</organismsDiffer>
    <experiments>3</experiments>
</comment>
<comment type="subcellular location">
    <subcellularLocation>
        <location>Membrane</location>
        <topology>Multi-pass membrane protein</topology>
    </subcellularLocation>
    <text evidence="2">Colocalizes with SDCBP2 in the apical region of the cell (PubMed:11102519).</text>
</comment>
<comment type="tissue specificity">
    <text>Highly expressed in lung, breast, colon and ovarian carcinomas. It is also present on some normal cells, endothelial cells in particular.</text>
</comment>
<comment type="similarity">
    <text evidence="3">Belongs to the L6 tetraspanin family.</text>
</comment>
<sequence length="202" mass="21632">MCYGKCARCIGHSLVGLALLCIAANILLYFPNGETKYASENHLSRFVWFFSGIVGGGLLMLLPAFVFIGLEQDDCCGCCGHENCGKRCAMLSSVLAALIGIAGSGYCVIVAALGLAEGPLCLDSLGQWNYTFASTEGQYLLDTSTWSECTEPKHIVEWNVSLFSILLALGGIEFILCLIQVINGVLGGICGFCCSHQQQYDC</sequence>
<name>T4S1_HUMAN</name>
<dbReference type="EMBL" id="M90657">
    <property type="protein sequence ID" value="AAA36158.1"/>
    <property type="molecule type" value="mRNA"/>
</dbReference>
<dbReference type="EMBL" id="CR456953">
    <property type="protein sequence ID" value="CAG33234.1"/>
    <property type="molecule type" value="mRNA"/>
</dbReference>
<dbReference type="EMBL" id="BC008442">
    <property type="protein sequence ID" value="AAH08442.1"/>
    <property type="molecule type" value="mRNA"/>
</dbReference>
<dbReference type="EMBL" id="BC010166">
    <property type="protein sequence ID" value="AAH10166.1"/>
    <property type="molecule type" value="mRNA"/>
</dbReference>
<dbReference type="CCDS" id="CCDS3143.1"/>
<dbReference type="PIR" id="A42926">
    <property type="entry name" value="A42926"/>
</dbReference>
<dbReference type="RefSeq" id="NP_055035.1">
    <property type="nucleotide sequence ID" value="NM_014220.3"/>
</dbReference>
<dbReference type="BioGRID" id="110249">
    <property type="interactions" value="10"/>
</dbReference>
<dbReference type="FunCoup" id="P30408">
    <property type="interactions" value="583"/>
</dbReference>
<dbReference type="IntAct" id="P30408">
    <property type="interactions" value="8"/>
</dbReference>
<dbReference type="MINT" id="P30408"/>
<dbReference type="STRING" id="9606.ENSP00000304277"/>
<dbReference type="TCDB" id="8.A.75.1.6">
    <property type="family name" value="the transmembrane 4 l6 (tm4l6) family"/>
</dbReference>
<dbReference type="GlyCosmos" id="P30408">
    <property type="glycosylation" value="2 sites, No reported glycans"/>
</dbReference>
<dbReference type="GlyGen" id="P30408">
    <property type="glycosylation" value="3 sites, 1 O-linked glycan (1 site)"/>
</dbReference>
<dbReference type="PhosphoSitePlus" id="P30408"/>
<dbReference type="SwissPalm" id="P30408"/>
<dbReference type="BioMuta" id="TM4SF1"/>
<dbReference type="DMDM" id="267068"/>
<dbReference type="jPOST" id="P30408"/>
<dbReference type="MassIVE" id="P30408"/>
<dbReference type="PaxDb" id="9606-ENSP00000304277"/>
<dbReference type="PeptideAtlas" id="P30408"/>
<dbReference type="ProteomicsDB" id="54663"/>
<dbReference type="Pumba" id="P30408"/>
<dbReference type="ABCD" id="P30408">
    <property type="antibodies" value="1 sequenced antibody"/>
</dbReference>
<dbReference type="Antibodypedia" id="1003">
    <property type="antibodies" value="270 antibodies from 32 providers"/>
</dbReference>
<dbReference type="DNASU" id="4071"/>
<dbReference type="Ensembl" id="ENST00000305366.8">
    <property type="protein sequence ID" value="ENSP00000304277.3"/>
    <property type="gene ID" value="ENSG00000169908.12"/>
</dbReference>
<dbReference type="GeneID" id="4071"/>
<dbReference type="KEGG" id="hsa:4071"/>
<dbReference type="MANE-Select" id="ENST00000305366.8">
    <property type="protein sequence ID" value="ENSP00000304277.3"/>
    <property type="RefSeq nucleotide sequence ID" value="NM_014220.3"/>
    <property type="RefSeq protein sequence ID" value="NP_055035.1"/>
</dbReference>
<dbReference type="UCSC" id="uc003exb.2">
    <property type="organism name" value="human"/>
</dbReference>
<dbReference type="AGR" id="HGNC:11853"/>
<dbReference type="CTD" id="4071"/>
<dbReference type="DisGeNET" id="4071"/>
<dbReference type="GeneCards" id="TM4SF1"/>
<dbReference type="HGNC" id="HGNC:11853">
    <property type="gene designation" value="TM4SF1"/>
</dbReference>
<dbReference type="HPA" id="ENSG00000169908">
    <property type="expression patterns" value="Low tissue specificity"/>
</dbReference>
<dbReference type="MIM" id="191155">
    <property type="type" value="gene"/>
</dbReference>
<dbReference type="neXtProt" id="NX_P30408"/>
<dbReference type="OpenTargets" id="ENSG00000169908"/>
<dbReference type="PharmGKB" id="PA36554"/>
<dbReference type="VEuPathDB" id="HostDB:ENSG00000169908"/>
<dbReference type="eggNOG" id="ENOG502RY7H">
    <property type="taxonomic scope" value="Eukaryota"/>
</dbReference>
<dbReference type="GeneTree" id="ENSGT01030000234590"/>
<dbReference type="HOGENOM" id="CLU_087168_1_0_1"/>
<dbReference type="InParanoid" id="P30408"/>
<dbReference type="OMA" id="ICRPCCY"/>
<dbReference type="OrthoDB" id="8697884at2759"/>
<dbReference type="PAN-GO" id="P30408">
    <property type="GO annotations" value="1 GO annotation based on evolutionary models"/>
</dbReference>
<dbReference type="PhylomeDB" id="P30408"/>
<dbReference type="TreeFam" id="TF331371"/>
<dbReference type="PathwayCommons" id="P30408"/>
<dbReference type="SignaLink" id="P30408"/>
<dbReference type="SIGNOR" id="P30408"/>
<dbReference type="BioGRID-ORCS" id="4071">
    <property type="hits" value="18 hits in 1153 CRISPR screens"/>
</dbReference>
<dbReference type="ChiTaRS" id="TM4SF1">
    <property type="organism name" value="human"/>
</dbReference>
<dbReference type="GeneWiki" id="TM4SF1"/>
<dbReference type="GenomeRNAi" id="4071"/>
<dbReference type="Pharos" id="P30408">
    <property type="development level" value="Tbio"/>
</dbReference>
<dbReference type="PRO" id="PR:P30408"/>
<dbReference type="Proteomes" id="UP000005640">
    <property type="component" value="Chromosome 3"/>
</dbReference>
<dbReference type="RNAct" id="P30408">
    <property type="molecule type" value="protein"/>
</dbReference>
<dbReference type="Bgee" id="ENSG00000169908">
    <property type="expression patterns" value="Expressed in vena cava and 204 other cell types or tissues"/>
</dbReference>
<dbReference type="ExpressionAtlas" id="P30408">
    <property type="expression patterns" value="baseline and differential"/>
</dbReference>
<dbReference type="GO" id="GO:0016020">
    <property type="term" value="C:membrane"/>
    <property type="evidence" value="ECO:0000318"/>
    <property type="project" value="GO_Central"/>
</dbReference>
<dbReference type="GO" id="GO:0005886">
    <property type="term" value="C:plasma membrane"/>
    <property type="evidence" value="ECO:0000314"/>
    <property type="project" value="UniProtKB"/>
</dbReference>
<dbReference type="GO" id="GO:0001825">
    <property type="term" value="P:blastocyst formation"/>
    <property type="evidence" value="ECO:0007669"/>
    <property type="project" value="Ensembl"/>
</dbReference>
<dbReference type="InterPro" id="IPR008661">
    <property type="entry name" value="L6_membrane"/>
</dbReference>
<dbReference type="PANTHER" id="PTHR14198:SF18">
    <property type="entry name" value="TRANSMEMBRANE 4 L6 FAMILY MEMBER 1"/>
    <property type="match status" value="1"/>
</dbReference>
<dbReference type="PANTHER" id="PTHR14198">
    <property type="entry name" value="TRANSMEMBRANE 4 L6 FAMILY MEMBER 1-RELATED"/>
    <property type="match status" value="1"/>
</dbReference>
<dbReference type="Pfam" id="PF05805">
    <property type="entry name" value="L6_membrane"/>
    <property type="match status" value="1"/>
</dbReference>
<reference key="1">
    <citation type="journal article" date="1992" name="Proc. Natl. Acad. Sci. U.S.A.">
        <title>Cloning and expression of the tumor-associated antigen L6.</title>
        <authorList>
            <person name="Marken J.S."/>
            <person name="Schieven G.L."/>
            <person name="Hellstroem I."/>
            <person name="Hellstroem K.E."/>
            <person name="Aruffo A."/>
        </authorList>
    </citation>
    <scope>NUCLEOTIDE SEQUENCE [MRNA]</scope>
</reference>
<reference key="2">
    <citation type="submission" date="2004-06" db="EMBL/GenBank/DDBJ databases">
        <title>Cloning of human full open reading frames in Gateway(TM) system entry vector (pDONR201).</title>
        <authorList>
            <person name="Ebert L."/>
            <person name="Schick M."/>
            <person name="Neubert P."/>
            <person name="Schatten R."/>
            <person name="Henze S."/>
            <person name="Korn B."/>
        </authorList>
    </citation>
    <scope>NUCLEOTIDE SEQUENCE [LARGE SCALE MRNA]</scope>
</reference>
<reference key="3">
    <citation type="journal article" date="2004" name="Genome Res.">
        <title>The status, quality, and expansion of the NIH full-length cDNA project: the Mammalian Gene Collection (MGC).</title>
        <authorList>
            <consortium name="The MGC Project Team"/>
        </authorList>
    </citation>
    <scope>NUCLEOTIDE SEQUENCE [LARGE SCALE MRNA]</scope>
    <source>
        <tissue>Bone marrow</tissue>
        <tissue>Lung</tissue>
    </source>
</reference>
<reference key="4">
    <citation type="journal article" date="1994" name="J. Biol. Chem.">
        <title>Membrane topology of the L6 antigen and identification of the protein epitope recognized by the L6 monoclonal antibody.</title>
        <authorList>
            <person name="Marken J.S."/>
            <person name="Bajorath J."/>
            <person name="Edwards C.P."/>
            <person name="Farr A.G."/>
            <person name="Schieven G.L."/>
            <person name="Hellstroem I."/>
            <person name="Hellstroem K.E."/>
            <person name="Aruffo A."/>
        </authorList>
    </citation>
    <scope>TOPOLOGY</scope>
</reference>
<reference key="5">
    <citation type="journal article" date="2000" name="Mol. Biol. Cell">
        <title>The carboxy-terminal cysteine of the tetraspanin L6 antigen is required for its interaction with SITAC, a novel PDZ protein.</title>
        <authorList>
            <person name="Borrell-Pages M."/>
            <person name="Fernandez-Larrea J."/>
            <person name="Borroto A."/>
            <person name="Rojo F."/>
            <person name="Baselga J."/>
            <person name="Arribas J."/>
        </authorList>
    </citation>
    <scope>MUTAGENESIS OF CYS-202</scope>
    <scope>INTERACTION WITH SDCBP2</scope>
    <scope>SUBCELLULAR LOCATION</scope>
</reference>
<reference key="6">
    <citation type="journal article" date="2011" name="BMC Syst. Biol.">
        <title>Initial characterization of the human central proteome.</title>
        <authorList>
            <person name="Burkard T.R."/>
            <person name="Planyavsky M."/>
            <person name="Kaupe I."/>
            <person name="Breitwieser F.P."/>
            <person name="Buerckstuemmer T."/>
            <person name="Bennett K.L."/>
            <person name="Superti-Furga G."/>
            <person name="Colinge J."/>
        </authorList>
    </citation>
    <scope>IDENTIFICATION BY MASS SPECTROMETRY [LARGE SCALE ANALYSIS]</scope>
</reference>
<feature type="chain" id="PRO_0000219295" description="Transmembrane 4 L6 family member 1">
    <location>
        <begin position="1"/>
        <end position="202"/>
    </location>
</feature>
<feature type="topological domain" description="Cytoplasmic" evidence="4">
    <location>
        <begin position="1"/>
        <end position="9"/>
    </location>
</feature>
<feature type="transmembrane region" description="Helical" evidence="3">
    <location>
        <begin position="10"/>
        <end position="30"/>
    </location>
</feature>
<feature type="topological domain" description="Extracellular" evidence="4">
    <location>
        <begin position="31"/>
        <end position="49"/>
    </location>
</feature>
<feature type="transmembrane region" description="Helical" evidence="3">
    <location>
        <begin position="50"/>
        <end position="70"/>
    </location>
</feature>
<feature type="topological domain" description="Cytoplasmic" evidence="4">
    <location>
        <begin position="71"/>
        <end position="93"/>
    </location>
</feature>
<feature type="transmembrane region" description="Helical" evidence="3">
    <location>
        <begin position="94"/>
        <end position="114"/>
    </location>
</feature>
<feature type="topological domain" description="Extracellular" evidence="4">
    <location>
        <begin position="115"/>
        <end position="161"/>
    </location>
</feature>
<feature type="transmembrane region" description="Helical" evidence="3">
    <location>
        <begin position="162"/>
        <end position="182"/>
    </location>
</feature>
<feature type="topological domain" description="Cytoplasmic" evidence="4">
    <location>
        <begin position="183"/>
        <end position="202"/>
    </location>
</feature>
<feature type="glycosylation site" description="N-linked (GlcNAc...) asparagine" evidence="1">
    <location>
        <position position="129"/>
    </location>
</feature>
<feature type="glycosylation site" description="N-linked (GlcNAc...) asparagine" evidence="1">
    <location>
        <position position="159"/>
    </location>
</feature>
<feature type="mutagenesis site" description="Abolishes interaction with SDCBP2. Loss of colocalization with SDCBP2 at the apical region of the cell." evidence="2">
    <original>C</original>
    <variation>G</variation>
    <location>
        <position position="202"/>
    </location>
</feature>
<keyword id="KW-0325">Glycoprotein</keyword>
<keyword id="KW-0472">Membrane</keyword>
<keyword id="KW-1267">Proteomics identification</keyword>
<keyword id="KW-1185">Reference proteome</keyword>
<keyword id="KW-0812">Transmembrane</keyword>
<keyword id="KW-1133">Transmembrane helix</keyword>
<gene>
    <name type="primary">TM4SF1</name>
    <name type="synonym">M3S1</name>
    <name type="synonym">TAAL6</name>
</gene>
<accession>P30408</accession>
<accession>Q6IB51</accession>
<proteinExistence type="evidence at protein level"/>
<protein>
    <recommendedName>
        <fullName>Transmembrane 4 L6 family member 1</fullName>
    </recommendedName>
    <alternativeName>
        <fullName>Membrane component chromosome 3 surface marker 1</fullName>
    </alternativeName>
    <alternativeName>
        <fullName>Tumor-associated antigen L6</fullName>
    </alternativeName>
</protein>